<gene>
    <name evidence="1" type="primary">rpsS</name>
    <name type="ordered locus">ABBFA_000436</name>
</gene>
<proteinExistence type="inferred from homology"/>
<evidence type="ECO:0000255" key="1">
    <source>
        <dbReference type="HAMAP-Rule" id="MF_00531"/>
    </source>
</evidence>
<evidence type="ECO:0000305" key="2"/>
<name>RS19_ACIB3</name>
<accession>B7GW06</accession>
<feature type="chain" id="PRO_1000127912" description="Small ribosomal subunit protein uS19">
    <location>
        <begin position="1"/>
        <end position="91"/>
    </location>
</feature>
<keyword id="KW-0687">Ribonucleoprotein</keyword>
<keyword id="KW-0689">Ribosomal protein</keyword>
<keyword id="KW-0694">RNA-binding</keyword>
<keyword id="KW-0699">rRNA-binding</keyword>
<dbReference type="EMBL" id="CP001172">
    <property type="protein sequence ID" value="ACJ59121.1"/>
    <property type="molecule type" value="Genomic_DNA"/>
</dbReference>
<dbReference type="RefSeq" id="WP_001138119.1">
    <property type="nucleotide sequence ID" value="NZ_CP001172.1"/>
</dbReference>
<dbReference type="SMR" id="B7GW06"/>
<dbReference type="GeneID" id="97425203"/>
<dbReference type="HOGENOM" id="CLU_144911_0_1_6"/>
<dbReference type="Proteomes" id="UP000006924">
    <property type="component" value="Chromosome"/>
</dbReference>
<dbReference type="GO" id="GO:0005737">
    <property type="term" value="C:cytoplasm"/>
    <property type="evidence" value="ECO:0007669"/>
    <property type="project" value="UniProtKB-ARBA"/>
</dbReference>
<dbReference type="GO" id="GO:0015935">
    <property type="term" value="C:small ribosomal subunit"/>
    <property type="evidence" value="ECO:0007669"/>
    <property type="project" value="InterPro"/>
</dbReference>
<dbReference type="GO" id="GO:0019843">
    <property type="term" value="F:rRNA binding"/>
    <property type="evidence" value="ECO:0007669"/>
    <property type="project" value="UniProtKB-UniRule"/>
</dbReference>
<dbReference type="GO" id="GO:0003735">
    <property type="term" value="F:structural constituent of ribosome"/>
    <property type="evidence" value="ECO:0007669"/>
    <property type="project" value="InterPro"/>
</dbReference>
<dbReference type="GO" id="GO:0000028">
    <property type="term" value="P:ribosomal small subunit assembly"/>
    <property type="evidence" value="ECO:0007669"/>
    <property type="project" value="TreeGrafter"/>
</dbReference>
<dbReference type="GO" id="GO:0006412">
    <property type="term" value="P:translation"/>
    <property type="evidence" value="ECO:0007669"/>
    <property type="project" value="UniProtKB-UniRule"/>
</dbReference>
<dbReference type="FunFam" id="3.30.860.10:FF:000001">
    <property type="entry name" value="30S ribosomal protein S19"/>
    <property type="match status" value="1"/>
</dbReference>
<dbReference type="Gene3D" id="3.30.860.10">
    <property type="entry name" value="30s Ribosomal Protein S19, Chain A"/>
    <property type="match status" value="1"/>
</dbReference>
<dbReference type="HAMAP" id="MF_00531">
    <property type="entry name" value="Ribosomal_uS19"/>
    <property type="match status" value="1"/>
</dbReference>
<dbReference type="InterPro" id="IPR002222">
    <property type="entry name" value="Ribosomal_uS19"/>
</dbReference>
<dbReference type="InterPro" id="IPR005732">
    <property type="entry name" value="Ribosomal_uS19_bac-type"/>
</dbReference>
<dbReference type="InterPro" id="IPR020934">
    <property type="entry name" value="Ribosomal_uS19_CS"/>
</dbReference>
<dbReference type="InterPro" id="IPR023575">
    <property type="entry name" value="Ribosomal_uS19_SF"/>
</dbReference>
<dbReference type="NCBIfam" id="TIGR01050">
    <property type="entry name" value="rpsS_bact"/>
    <property type="match status" value="1"/>
</dbReference>
<dbReference type="PANTHER" id="PTHR11880">
    <property type="entry name" value="RIBOSOMAL PROTEIN S19P FAMILY MEMBER"/>
    <property type="match status" value="1"/>
</dbReference>
<dbReference type="PANTHER" id="PTHR11880:SF8">
    <property type="entry name" value="SMALL RIBOSOMAL SUBUNIT PROTEIN US19M"/>
    <property type="match status" value="1"/>
</dbReference>
<dbReference type="Pfam" id="PF00203">
    <property type="entry name" value="Ribosomal_S19"/>
    <property type="match status" value="1"/>
</dbReference>
<dbReference type="PIRSF" id="PIRSF002144">
    <property type="entry name" value="Ribosomal_S19"/>
    <property type="match status" value="1"/>
</dbReference>
<dbReference type="PRINTS" id="PR00975">
    <property type="entry name" value="RIBOSOMALS19"/>
</dbReference>
<dbReference type="SUPFAM" id="SSF54570">
    <property type="entry name" value="Ribosomal protein S19"/>
    <property type="match status" value="1"/>
</dbReference>
<dbReference type="PROSITE" id="PS00323">
    <property type="entry name" value="RIBOSOMAL_S19"/>
    <property type="match status" value="1"/>
</dbReference>
<organism>
    <name type="scientific">Acinetobacter baumannii (strain AB307-0294)</name>
    <dbReference type="NCBI Taxonomy" id="557600"/>
    <lineage>
        <taxon>Bacteria</taxon>
        <taxon>Pseudomonadati</taxon>
        <taxon>Pseudomonadota</taxon>
        <taxon>Gammaproteobacteria</taxon>
        <taxon>Moraxellales</taxon>
        <taxon>Moraxellaceae</taxon>
        <taxon>Acinetobacter</taxon>
        <taxon>Acinetobacter calcoaceticus/baumannii complex</taxon>
    </lineage>
</organism>
<comment type="function">
    <text evidence="1">Protein S19 forms a complex with S13 that binds strongly to the 16S ribosomal RNA.</text>
</comment>
<comment type="similarity">
    <text evidence="1">Belongs to the universal ribosomal protein uS19 family.</text>
</comment>
<sequence>MPRSLKKGPFVDAHLFAKVEAAVASNSRKPIKTWSRRSMILPDFVGLTISVHNGRNHVPVIVTEHMVGHKLGEFAPTRTYRGHGVDKKSKR</sequence>
<protein>
    <recommendedName>
        <fullName evidence="1">Small ribosomal subunit protein uS19</fullName>
    </recommendedName>
    <alternativeName>
        <fullName evidence="2">30S ribosomal protein S19</fullName>
    </alternativeName>
</protein>
<reference key="1">
    <citation type="journal article" date="2008" name="J. Bacteriol.">
        <title>Comparative genome sequence analysis of multidrug-resistant Acinetobacter baumannii.</title>
        <authorList>
            <person name="Adams M.D."/>
            <person name="Goglin K."/>
            <person name="Molyneaux N."/>
            <person name="Hujer K.M."/>
            <person name="Lavender H."/>
            <person name="Jamison J.J."/>
            <person name="MacDonald I.J."/>
            <person name="Martin K.M."/>
            <person name="Russo T."/>
            <person name="Campagnari A.A."/>
            <person name="Hujer A.M."/>
            <person name="Bonomo R.A."/>
            <person name="Gill S.R."/>
        </authorList>
    </citation>
    <scope>NUCLEOTIDE SEQUENCE [LARGE SCALE GENOMIC DNA]</scope>
    <source>
        <strain>AB307-0294</strain>
    </source>
</reference>